<comment type="function">
    <text evidence="1">Catalyzes the synthesis of the hydroxymethylpyrimidine phosphate (HMP-P) moiety of thiamine from aminoimidazole ribotide (AIR) in a radical S-adenosyl-L-methionine (SAM)-dependent reaction.</text>
</comment>
<comment type="catalytic activity">
    <reaction evidence="1">
        <text>5-amino-1-(5-phospho-beta-D-ribosyl)imidazole + S-adenosyl-L-methionine = 4-amino-2-methyl-5-(phosphooxymethyl)pyrimidine + CO + 5'-deoxyadenosine + formate + L-methionine + 3 H(+)</text>
        <dbReference type="Rhea" id="RHEA:24840"/>
        <dbReference type="ChEBI" id="CHEBI:15378"/>
        <dbReference type="ChEBI" id="CHEBI:15740"/>
        <dbReference type="ChEBI" id="CHEBI:17245"/>
        <dbReference type="ChEBI" id="CHEBI:17319"/>
        <dbReference type="ChEBI" id="CHEBI:57844"/>
        <dbReference type="ChEBI" id="CHEBI:58354"/>
        <dbReference type="ChEBI" id="CHEBI:59789"/>
        <dbReference type="ChEBI" id="CHEBI:137981"/>
        <dbReference type="EC" id="4.1.99.17"/>
    </reaction>
</comment>
<comment type="cofactor">
    <cofactor evidence="1">
        <name>[4Fe-4S] cluster</name>
        <dbReference type="ChEBI" id="CHEBI:49883"/>
    </cofactor>
    <text evidence="1">Binds 1 [4Fe-4S] cluster per subunit. The cluster is coordinated with 3 cysteines and an exchangeable S-adenosyl-L-methionine.</text>
</comment>
<comment type="pathway">
    <text evidence="1">Cofactor biosynthesis; thiamine diphosphate biosynthesis.</text>
</comment>
<comment type="similarity">
    <text evidence="1">Belongs to the ThiC family.</text>
</comment>
<name>THIC_CLOD6</name>
<evidence type="ECO:0000255" key="1">
    <source>
        <dbReference type="HAMAP-Rule" id="MF_00089"/>
    </source>
</evidence>
<dbReference type="EC" id="4.1.99.17" evidence="1"/>
<dbReference type="EMBL" id="AM180355">
    <property type="protein sequence ID" value="CAJ68569.1"/>
    <property type="molecule type" value="Genomic_DNA"/>
</dbReference>
<dbReference type="RefSeq" id="WP_009889633.1">
    <property type="nucleotide sequence ID" value="NZ_JAUPES010000035.1"/>
</dbReference>
<dbReference type="RefSeq" id="YP_001088205.1">
    <property type="nucleotide sequence ID" value="NC_009089.1"/>
</dbReference>
<dbReference type="SMR" id="Q186R0"/>
<dbReference type="STRING" id="272563.CD630_17020"/>
<dbReference type="EnsemblBacteria" id="CAJ68569">
    <property type="protein sequence ID" value="CAJ68569"/>
    <property type="gene ID" value="CD630_17020"/>
</dbReference>
<dbReference type="GeneID" id="66354114"/>
<dbReference type="KEGG" id="cdf:CD630_17020"/>
<dbReference type="PATRIC" id="fig|272563.8.peg.1780"/>
<dbReference type="eggNOG" id="COG0422">
    <property type="taxonomic scope" value="Bacteria"/>
</dbReference>
<dbReference type="OrthoDB" id="9805897at2"/>
<dbReference type="PhylomeDB" id="Q186R0"/>
<dbReference type="BioCyc" id="PDIF272563:G12WB-1844-MONOMER"/>
<dbReference type="UniPathway" id="UPA00060"/>
<dbReference type="Proteomes" id="UP000001978">
    <property type="component" value="Chromosome"/>
</dbReference>
<dbReference type="GO" id="GO:0005829">
    <property type="term" value="C:cytosol"/>
    <property type="evidence" value="ECO:0007669"/>
    <property type="project" value="TreeGrafter"/>
</dbReference>
<dbReference type="GO" id="GO:0051539">
    <property type="term" value="F:4 iron, 4 sulfur cluster binding"/>
    <property type="evidence" value="ECO:0007669"/>
    <property type="project" value="UniProtKB-KW"/>
</dbReference>
<dbReference type="GO" id="GO:0016830">
    <property type="term" value="F:carbon-carbon lyase activity"/>
    <property type="evidence" value="ECO:0007669"/>
    <property type="project" value="InterPro"/>
</dbReference>
<dbReference type="GO" id="GO:0008270">
    <property type="term" value="F:zinc ion binding"/>
    <property type="evidence" value="ECO:0007669"/>
    <property type="project" value="UniProtKB-UniRule"/>
</dbReference>
<dbReference type="GO" id="GO:0009228">
    <property type="term" value="P:thiamine biosynthetic process"/>
    <property type="evidence" value="ECO:0007669"/>
    <property type="project" value="UniProtKB-KW"/>
</dbReference>
<dbReference type="GO" id="GO:0009229">
    <property type="term" value="P:thiamine diphosphate biosynthetic process"/>
    <property type="evidence" value="ECO:0007669"/>
    <property type="project" value="UniProtKB-UniRule"/>
</dbReference>
<dbReference type="FunFam" id="3.20.20.540:FF:000001">
    <property type="entry name" value="Phosphomethylpyrimidine synthase"/>
    <property type="match status" value="1"/>
</dbReference>
<dbReference type="Gene3D" id="6.10.250.620">
    <property type="match status" value="1"/>
</dbReference>
<dbReference type="Gene3D" id="3.20.20.540">
    <property type="entry name" value="Radical SAM ThiC family, central domain"/>
    <property type="match status" value="1"/>
</dbReference>
<dbReference type="HAMAP" id="MF_00089">
    <property type="entry name" value="ThiC"/>
    <property type="match status" value="1"/>
</dbReference>
<dbReference type="InterPro" id="IPR037509">
    <property type="entry name" value="ThiC"/>
</dbReference>
<dbReference type="InterPro" id="IPR038521">
    <property type="entry name" value="ThiC/Bza_core_dom"/>
</dbReference>
<dbReference type="InterPro" id="IPR002817">
    <property type="entry name" value="ThiC/BzaA/B"/>
</dbReference>
<dbReference type="NCBIfam" id="NF009895">
    <property type="entry name" value="PRK13352.1"/>
    <property type="match status" value="1"/>
</dbReference>
<dbReference type="NCBIfam" id="TIGR00190">
    <property type="entry name" value="thiC"/>
    <property type="match status" value="1"/>
</dbReference>
<dbReference type="PANTHER" id="PTHR30557:SF1">
    <property type="entry name" value="PHOSPHOMETHYLPYRIMIDINE SYNTHASE, CHLOROPLASTIC"/>
    <property type="match status" value="1"/>
</dbReference>
<dbReference type="PANTHER" id="PTHR30557">
    <property type="entry name" value="THIAMINE BIOSYNTHESIS PROTEIN THIC"/>
    <property type="match status" value="1"/>
</dbReference>
<dbReference type="Pfam" id="PF01964">
    <property type="entry name" value="ThiC_Rad_SAM"/>
    <property type="match status" value="1"/>
</dbReference>
<dbReference type="SFLD" id="SFLDF00407">
    <property type="entry name" value="phosphomethylpyrimidine_syntha"/>
    <property type="match status" value="1"/>
</dbReference>
<dbReference type="SFLD" id="SFLDG01114">
    <property type="entry name" value="phosphomethylpyrimidine_syntha"/>
    <property type="match status" value="1"/>
</dbReference>
<dbReference type="SFLD" id="SFLDS00113">
    <property type="entry name" value="Radical_SAM_Phosphomethylpyrim"/>
    <property type="match status" value="1"/>
</dbReference>
<gene>
    <name evidence="1" type="primary">thiC</name>
    <name type="ordered locus">CD630_17020</name>
</gene>
<proteinExistence type="inferred from homology"/>
<accession>Q186R0</accession>
<protein>
    <recommendedName>
        <fullName evidence="1">Phosphomethylpyrimidine synthase</fullName>
        <ecNumber evidence="1">4.1.99.17</ecNumber>
    </recommendedName>
    <alternativeName>
        <fullName evidence="1">Hydroxymethylpyrimidine phosphate synthase</fullName>
        <shortName evidence="1">HMP-P synthase</shortName>
        <shortName evidence="1">HMP-phosphate synthase</shortName>
        <shortName evidence="1">HMPP synthase</shortName>
    </alternativeName>
    <alternativeName>
        <fullName evidence="1">Thiamine biosynthesis protein ThiC</fullName>
    </alternativeName>
</protein>
<keyword id="KW-0004">4Fe-4S</keyword>
<keyword id="KW-0408">Iron</keyword>
<keyword id="KW-0411">Iron-sulfur</keyword>
<keyword id="KW-0456">Lyase</keyword>
<keyword id="KW-0479">Metal-binding</keyword>
<keyword id="KW-1185">Reference proteome</keyword>
<keyword id="KW-0949">S-adenosyl-L-methionine</keyword>
<keyword id="KW-0784">Thiamine biosynthesis</keyword>
<keyword id="KW-0862">Zinc</keyword>
<feature type="chain" id="PRO_1000004753" description="Phosphomethylpyrimidine synthase">
    <location>
        <begin position="1"/>
        <end position="433"/>
    </location>
</feature>
<feature type="binding site" evidence="1">
    <location>
        <position position="69"/>
    </location>
    <ligand>
        <name>substrate</name>
    </ligand>
</feature>
<feature type="binding site" evidence="1">
    <location>
        <position position="98"/>
    </location>
    <ligand>
        <name>substrate</name>
    </ligand>
</feature>
<feature type="binding site" evidence="1">
    <location>
        <position position="127"/>
    </location>
    <ligand>
        <name>substrate</name>
    </ligand>
</feature>
<feature type="binding site" evidence="1">
    <location>
        <position position="163"/>
    </location>
    <ligand>
        <name>substrate</name>
    </ligand>
</feature>
<feature type="binding site" evidence="1">
    <location>
        <begin position="185"/>
        <end position="187"/>
    </location>
    <ligand>
        <name>substrate</name>
    </ligand>
</feature>
<feature type="binding site" evidence="1">
    <location>
        <begin position="226"/>
        <end position="229"/>
    </location>
    <ligand>
        <name>substrate</name>
    </ligand>
</feature>
<feature type="binding site" evidence="1">
    <location>
        <position position="265"/>
    </location>
    <ligand>
        <name>substrate</name>
    </ligand>
</feature>
<feature type="binding site" evidence="1">
    <location>
        <position position="269"/>
    </location>
    <ligand>
        <name>Zn(2+)</name>
        <dbReference type="ChEBI" id="CHEBI:29105"/>
    </ligand>
</feature>
<feature type="binding site" evidence="1">
    <location>
        <position position="292"/>
    </location>
    <ligand>
        <name>substrate</name>
    </ligand>
</feature>
<feature type="binding site" evidence="1">
    <location>
        <position position="333"/>
    </location>
    <ligand>
        <name>Zn(2+)</name>
        <dbReference type="ChEBI" id="CHEBI:29105"/>
    </ligand>
</feature>
<feature type="binding site" evidence="1">
    <location>
        <position position="409"/>
    </location>
    <ligand>
        <name>[4Fe-4S] cluster</name>
        <dbReference type="ChEBI" id="CHEBI:49883"/>
        <note>4Fe-4S-S-AdoMet</note>
    </ligand>
</feature>
<feature type="binding site" evidence="1">
    <location>
        <position position="412"/>
    </location>
    <ligand>
        <name>[4Fe-4S] cluster</name>
        <dbReference type="ChEBI" id="CHEBI:49883"/>
        <note>4Fe-4S-S-AdoMet</note>
    </ligand>
</feature>
<feature type="binding site" evidence="1">
    <location>
        <position position="416"/>
    </location>
    <ligand>
        <name>[4Fe-4S] cluster</name>
        <dbReference type="ChEBI" id="CHEBI:49883"/>
        <note>4Fe-4S-S-AdoMet</note>
    </ligand>
</feature>
<reference key="1">
    <citation type="journal article" date="2006" name="Nat. Genet.">
        <title>The multidrug-resistant human pathogen Clostridium difficile has a highly mobile, mosaic genome.</title>
        <authorList>
            <person name="Sebaihia M."/>
            <person name="Wren B.W."/>
            <person name="Mullany P."/>
            <person name="Fairweather N.F."/>
            <person name="Minton N."/>
            <person name="Stabler R."/>
            <person name="Thomson N.R."/>
            <person name="Roberts A.P."/>
            <person name="Cerdeno-Tarraga A.M."/>
            <person name="Wang H."/>
            <person name="Holden M.T.G."/>
            <person name="Wright A."/>
            <person name="Churcher C."/>
            <person name="Quail M.A."/>
            <person name="Baker S."/>
            <person name="Bason N."/>
            <person name="Brooks K."/>
            <person name="Chillingworth T."/>
            <person name="Cronin A."/>
            <person name="Davis P."/>
            <person name="Dowd L."/>
            <person name="Fraser A."/>
            <person name="Feltwell T."/>
            <person name="Hance Z."/>
            <person name="Holroyd S."/>
            <person name="Jagels K."/>
            <person name="Moule S."/>
            <person name="Mungall K."/>
            <person name="Price C."/>
            <person name="Rabbinowitsch E."/>
            <person name="Sharp S."/>
            <person name="Simmonds M."/>
            <person name="Stevens K."/>
            <person name="Unwin L."/>
            <person name="Whithead S."/>
            <person name="Dupuy B."/>
            <person name="Dougan G."/>
            <person name="Barrell B."/>
            <person name="Parkhill J."/>
        </authorList>
    </citation>
    <scope>NUCLEOTIDE SEQUENCE [LARGE SCALE GENOMIC DNA]</scope>
    <source>
        <strain>630</strain>
    </source>
</reference>
<sequence length="433" mass="48451">MNYTTQMDAARKGIITKEMEIVSQKEQVDVNELRELIANGQVVIPANKNHKSLSAEGVGKNLRTKINVNLGISRDCKDIEKELEKVRVAIDMKAEAIMDLSNYGKTREFREKVVEMSPAMIGSVPMYDAVGYLEKELKDITEEEFLNVIRQHAIDGVDFITIHAGLTRSVCQKIKNHERLTHIVSRGGSLLFAWMELNNKENPIYTNFDKILDICEEYDVTLSLGDACRPGCIKDSTDGVQIQELVVLGELTKRAWERNVQVMIEGPGHMAIDEIEANVVLEKRLCHGAPFYVLGPLVTDIAPGYDHITSAIGGALACAKGVDFLCYVTPAEHLRLPNLDDMKEGIIAAKIAAHAGDIAKNVKGAREWDNKMSKARADLDWCEMFRLAIDPEKAKRYRDESTPTHEDSCTMCGKMCSMRTVKKILNNEELNLI</sequence>
<organism>
    <name type="scientific">Clostridioides difficile (strain 630)</name>
    <name type="common">Peptoclostridium difficile</name>
    <dbReference type="NCBI Taxonomy" id="272563"/>
    <lineage>
        <taxon>Bacteria</taxon>
        <taxon>Bacillati</taxon>
        <taxon>Bacillota</taxon>
        <taxon>Clostridia</taxon>
        <taxon>Peptostreptococcales</taxon>
        <taxon>Peptostreptococcaceae</taxon>
        <taxon>Clostridioides</taxon>
    </lineage>
</organism>